<dbReference type="EC" id="2.3.2.23"/>
<dbReference type="EMBL" id="CM003141">
    <property type="protein sequence ID" value="KIS71308.1"/>
    <property type="molecule type" value="Genomic_DNA"/>
</dbReference>
<dbReference type="RefSeq" id="XP_011387145.1">
    <property type="nucleotide sequence ID" value="XM_011388843.1"/>
</dbReference>
<dbReference type="SMR" id="Q4PFA5"/>
<dbReference type="FunCoup" id="Q4PFA5">
    <property type="interactions" value="413"/>
</dbReference>
<dbReference type="STRING" id="237631.Q4PFA5"/>
<dbReference type="EnsemblFungi" id="KIS71308">
    <property type="protein sequence ID" value="KIS71308"/>
    <property type="gene ID" value="UMAG_01208"/>
</dbReference>
<dbReference type="GeneID" id="23562301"/>
<dbReference type="KEGG" id="uma:UMAG_01208"/>
<dbReference type="VEuPathDB" id="FungiDB:UMAG_01208"/>
<dbReference type="eggNOG" id="KOG0419">
    <property type="taxonomic scope" value="Eukaryota"/>
</dbReference>
<dbReference type="HOGENOM" id="CLU_030988_10_2_1"/>
<dbReference type="InParanoid" id="Q4PFA5"/>
<dbReference type="OMA" id="DHKSQYI"/>
<dbReference type="OrthoDB" id="9984419at2759"/>
<dbReference type="UniPathway" id="UPA00143"/>
<dbReference type="Proteomes" id="UP000000561">
    <property type="component" value="Chromosome 2"/>
</dbReference>
<dbReference type="GO" id="GO:0000781">
    <property type="term" value="C:chromosome, telomeric region"/>
    <property type="evidence" value="ECO:0007669"/>
    <property type="project" value="GOC"/>
</dbReference>
<dbReference type="GO" id="GO:0005737">
    <property type="term" value="C:cytoplasm"/>
    <property type="evidence" value="ECO:0007669"/>
    <property type="project" value="UniProtKB-SubCell"/>
</dbReference>
<dbReference type="GO" id="GO:0033503">
    <property type="term" value="C:HULC complex"/>
    <property type="evidence" value="ECO:0000318"/>
    <property type="project" value="GO_Central"/>
</dbReference>
<dbReference type="GO" id="GO:1990304">
    <property type="term" value="C:MUB1-RAD6-UBR2 ubiquitin ligase complex"/>
    <property type="evidence" value="ECO:0007669"/>
    <property type="project" value="EnsemblFungi"/>
</dbReference>
<dbReference type="GO" id="GO:0005634">
    <property type="term" value="C:nucleus"/>
    <property type="evidence" value="ECO:0007669"/>
    <property type="project" value="UniProtKB-SubCell"/>
</dbReference>
<dbReference type="GO" id="GO:0097505">
    <property type="term" value="C:Rad6-Rad18 complex"/>
    <property type="evidence" value="ECO:0007669"/>
    <property type="project" value="EnsemblFungi"/>
</dbReference>
<dbReference type="GO" id="GO:1990305">
    <property type="term" value="C:RAD6-UBR2 ubiquitin ligase complex"/>
    <property type="evidence" value="ECO:0007669"/>
    <property type="project" value="EnsemblFungi"/>
</dbReference>
<dbReference type="GO" id="GO:1990303">
    <property type="term" value="C:UBR1-RAD6 ubiquitin ligase complex"/>
    <property type="evidence" value="ECO:0007669"/>
    <property type="project" value="EnsemblFungi"/>
</dbReference>
<dbReference type="GO" id="GO:0005524">
    <property type="term" value="F:ATP binding"/>
    <property type="evidence" value="ECO:0007669"/>
    <property type="project" value="UniProtKB-KW"/>
</dbReference>
<dbReference type="GO" id="GO:0070628">
    <property type="term" value="F:proteasome binding"/>
    <property type="evidence" value="ECO:0007669"/>
    <property type="project" value="EnsemblFungi"/>
</dbReference>
<dbReference type="GO" id="GO:0003697">
    <property type="term" value="F:single-stranded DNA binding"/>
    <property type="evidence" value="ECO:0007669"/>
    <property type="project" value="EnsemblFungi"/>
</dbReference>
<dbReference type="GO" id="GO:0017116">
    <property type="term" value="F:single-stranded DNA helicase activity"/>
    <property type="evidence" value="ECO:0007669"/>
    <property type="project" value="EnsemblFungi"/>
</dbReference>
<dbReference type="GO" id="GO:0061631">
    <property type="term" value="F:ubiquitin conjugating enzyme activity"/>
    <property type="evidence" value="ECO:0000318"/>
    <property type="project" value="GO_Central"/>
</dbReference>
<dbReference type="GO" id="GO:0034620">
    <property type="term" value="P:cellular response to unfolded protein"/>
    <property type="evidence" value="ECO:0007669"/>
    <property type="project" value="EnsemblFungi"/>
</dbReference>
<dbReference type="GO" id="GO:0071629">
    <property type="term" value="P:cytoplasm protein quality control by the ubiquitin-proteasome system"/>
    <property type="evidence" value="ECO:0007669"/>
    <property type="project" value="EnsemblFungi"/>
</dbReference>
<dbReference type="GO" id="GO:0006281">
    <property type="term" value="P:DNA repair"/>
    <property type="evidence" value="ECO:0000318"/>
    <property type="project" value="GO_Central"/>
</dbReference>
<dbReference type="GO" id="GO:0006353">
    <property type="term" value="P:DNA-templated transcription termination"/>
    <property type="evidence" value="ECO:0007669"/>
    <property type="project" value="EnsemblFungi"/>
</dbReference>
<dbReference type="GO" id="GO:0000724">
    <property type="term" value="P:double-strand break repair via homologous recombination"/>
    <property type="evidence" value="ECO:0007669"/>
    <property type="project" value="EnsemblFungi"/>
</dbReference>
<dbReference type="GO" id="GO:0036503">
    <property type="term" value="P:ERAD pathway"/>
    <property type="evidence" value="ECO:0007669"/>
    <property type="project" value="EnsemblFungi"/>
</dbReference>
<dbReference type="GO" id="GO:0042275">
    <property type="term" value="P:error-free postreplication DNA repair"/>
    <property type="evidence" value="ECO:0007669"/>
    <property type="project" value="EnsemblFungi"/>
</dbReference>
<dbReference type="GO" id="GO:0070987">
    <property type="term" value="P:error-free translesion synthesis"/>
    <property type="evidence" value="ECO:0007669"/>
    <property type="project" value="EnsemblFungi"/>
</dbReference>
<dbReference type="GO" id="GO:0042276">
    <property type="term" value="P:error-prone translesion synthesis"/>
    <property type="evidence" value="ECO:0007669"/>
    <property type="project" value="EnsemblFungi"/>
</dbReference>
<dbReference type="GO" id="GO:0042138">
    <property type="term" value="P:meiotic DNA double-strand break formation"/>
    <property type="evidence" value="ECO:0007669"/>
    <property type="project" value="EnsemblFungi"/>
</dbReference>
<dbReference type="GO" id="GO:0031571">
    <property type="term" value="P:mitotic G1 DNA damage checkpoint signaling"/>
    <property type="evidence" value="ECO:0007669"/>
    <property type="project" value="EnsemblFungi"/>
</dbReference>
<dbReference type="GO" id="GO:2000639">
    <property type="term" value="P:negative regulation of SREBP signaling pathway"/>
    <property type="evidence" value="ECO:0007669"/>
    <property type="project" value="EnsemblFungi"/>
</dbReference>
<dbReference type="GO" id="GO:0043161">
    <property type="term" value="P:proteasome-mediated ubiquitin-dependent protein catabolic process"/>
    <property type="evidence" value="ECO:0000318"/>
    <property type="project" value="GO_Central"/>
</dbReference>
<dbReference type="GO" id="GO:0000209">
    <property type="term" value="P:protein polyubiquitination"/>
    <property type="evidence" value="ECO:0000318"/>
    <property type="project" value="GO_Central"/>
</dbReference>
<dbReference type="GO" id="GO:0090089">
    <property type="term" value="P:regulation of dipeptide transport"/>
    <property type="evidence" value="ECO:0007669"/>
    <property type="project" value="EnsemblFungi"/>
</dbReference>
<dbReference type="GO" id="GO:0009302">
    <property type="term" value="P:sno(s)RNA transcription"/>
    <property type="evidence" value="ECO:0007669"/>
    <property type="project" value="EnsemblFungi"/>
</dbReference>
<dbReference type="GO" id="GO:0030435">
    <property type="term" value="P:sporulation resulting in formation of a cellular spore"/>
    <property type="evidence" value="ECO:0007669"/>
    <property type="project" value="UniProtKB-KW"/>
</dbReference>
<dbReference type="GO" id="GO:0120174">
    <property type="term" value="P:stress-induced homeostatically regulated protein degradation pathway"/>
    <property type="evidence" value="ECO:0007669"/>
    <property type="project" value="EnsemblFungi"/>
</dbReference>
<dbReference type="GO" id="GO:0031509">
    <property type="term" value="P:subtelomeric heterochromatin formation"/>
    <property type="evidence" value="ECO:0007669"/>
    <property type="project" value="EnsemblFungi"/>
</dbReference>
<dbReference type="GO" id="GO:0000722">
    <property type="term" value="P:telomere maintenance via recombination"/>
    <property type="evidence" value="ECO:0007669"/>
    <property type="project" value="EnsemblFungi"/>
</dbReference>
<dbReference type="GO" id="GO:0006366">
    <property type="term" value="P:transcription by RNA polymerase II"/>
    <property type="evidence" value="ECO:0007669"/>
    <property type="project" value="EnsemblFungi"/>
</dbReference>
<dbReference type="GO" id="GO:0071596">
    <property type="term" value="P:ubiquitin-dependent protein catabolic process via the N-end rule pathway"/>
    <property type="evidence" value="ECO:0007669"/>
    <property type="project" value="EnsemblFungi"/>
</dbReference>
<dbReference type="CDD" id="cd23790">
    <property type="entry name" value="UBCc_UBE2A_2B"/>
    <property type="match status" value="1"/>
</dbReference>
<dbReference type="FunFam" id="3.10.110.10:FF:000004">
    <property type="entry name" value="Ubiquitin-conjugating enzyme E2 A"/>
    <property type="match status" value="1"/>
</dbReference>
<dbReference type="Gene3D" id="3.10.110.10">
    <property type="entry name" value="Ubiquitin Conjugating Enzyme"/>
    <property type="match status" value="1"/>
</dbReference>
<dbReference type="InterPro" id="IPR050113">
    <property type="entry name" value="Ub_conjugating_enzyme"/>
</dbReference>
<dbReference type="InterPro" id="IPR000608">
    <property type="entry name" value="UBQ-conjugat_E2_core"/>
</dbReference>
<dbReference type="InterPro" id="IPR023313">
    <property type="entry name" value="UBQ-conjugating_AS"/>
</dbReference>
<dbReference type="InterPro" id="IPR016135">
    <property type="entry name" value="UBQ-conjugating_enzyme/RWD"/>
</dbReference>
<dbReference type="PANTHER" id="PTHR24067">
    <property type="entry name" value="UBIQUITIN-CONJUGATING ENZYME E2"/>
    <property type="match status" value="1"/>
</dbReference>
<dbReference type="Pfam" id="PF00179">
    <property type="entry name" value="UQ_con"/>
    <property type="match status" value="1"/>
</dbReference>
<dbReference type="SMART" id="SM00212">
    <property type="entry name" value="UBCc"/>
    <property type="match status" value="1"/>
</dbReference>
<dbReference type="SUPFAM" id="SSF54495">
    <property type="entry name" value="UBC-like"/>
    <property type="match status" value="1"/>
</dbReference>
<dbReference type="PROSITE" id="PS00183">
    <property type="entry name" value="UBC_1"/>
    <property type="match status" value="1"/>
</dbReference>
<dbReference type="PROSITE" id="PS50127">
    <property type="entry name" value="UBC_2"/>
    <property type="match status" value="1"/>
</dbReference>
<sequence>MSTPSKKRLIRDFKRLSTDPPGGISGAPCADNLMIWNAVIFGPADTPFEDGTFKLVLTFDESYPNKPPTVKFLSKMFHPNVYANGELCLDILQNRWSPTYDVAAILTSIQSLLHDPNPNSPANAEAASLYRENMKEYVRRVKATVEASWLDDGEMPESIEEDDEAEAEAEAEATVDRSAPQTASA</sequence>
<comment type="function">
    <text evidence="2">Catalyzes the covalent attachment of ubiquitin to other proteins. Plays a role in transcription regulation by catalyzing the monoubiquitination of histone H2B to form H2BK123ub1. H2BK123ub1 gives a specific tag for epigenetic transcriptional activation and is also a prerequisite for H3K4me and H3K79me formation. Also involved in postreplication repair of UV-damaged DNA, in N-end rule-dependent protein degradation and in sporulation.</text>
</comment>
<comment type="catalytic activity">
    <reaction evidence="2 3">
        <text>S-ubiquitinyl-[E1 ubiquitin-activating enzyme]-L-cysteine + [E2 ubiquitin-conjugating enzyme]-L-cysteine = [E1 ubiquitin-activating enzyme]-L-cysteine + S-ubiquitinyl-[E2 ubiquitin-conjugating enzyme]-L-cysteine.</text>
        <dbReference type="EC" id="2.3.2.23"/>
    </reaction>
</comment>
<comment type="pathway">
    <text evidence="2">Protein modification; protein ubiquitination.</text>
</comment>
<comment type="subcellular location">
    <subcellularLocation>
        <location evidence="1">Cytoplasm</location>
    </subcellularLocation>
    <subcellularLocation>
        <location evidence="1">Nucleus</location>
    </subcellularLocation>
</comment>
<comment type="similarity">
    <text evidence="2">Belongs to the ubiquitin-conjugating enzyme family.</text>
</comment>
<keyword id="KW-0067">ATP-binding</keyword>
<keyword id="KW-0156">Chromatin regulator</keyword>
<keyword id="KW-0963">Cytoplasm</keyword>
<keyword id="KW-0227">DNA damage</keyword>
<keyword id="KW-0234">DNA repair</keyword>
<keyword id="KW-0547">Nucleotide-binding</keyword>
<keyword id="KW-0539">Nucleus</keyword>
<keyword id="KW-1185">Reference proteome</keyword>
<keyword id="KW-0749">Sporulation</keyword>
<keyword id="KW-0804">Transcription</keyword>
<keyword id="KW-0805">Transcription regulation</keyword>
<keyword id="KW-0808">Transferase</keyword>
<keyword id="KW-0833">Ubl conjugation pathway</keyword>
<accession>Q4PFA5</accession>
<accession>A0A0D1CY72</accession>
<feature type="chain" id="PRO_0000082538" description="Ubiquitin-conjugating enzyme E2 2">
    <location>
        <begin position="1"/>
        <end position="185"/>
    </location>
</feature>
<feature type="domain" description="UBC core" evidence="2">
    <location>
        <begin position="4"/>
        <end position="150"/>
    </location>
</feature>
<feature type="region of interest" description="Disordered" evidence="4">
    <location>
        <begin position="149"/>
        <end position="185"/>
    </location>
</feature>
<feature type="compositionally biased region" description="Acidic residues" evidence="4">
    <location>
        <begin position="149"/>
        <end position="173"/>
    </location>
</feature>
<feature type="active site" description="Glycyl thioester intermediate" evidence="2 3">
    <location>
        <position position="88"/>
    </location>
</feature>
<proteinExistence type="inferred from homology"/>
<gene>
    <name type="primary">UBC2</name>
    <name type="ORF">UMAG_01208</name>
</gene>
<name>UBC2_MYCMD</name>
<protein>
    <recommendedName>
        <fullName>Ubiquitin-conjugating enzyme E2 2</fullName>
        <ecNumber>2.3.2.23</ecNumber>
    </recommendedName>
    <alternativeName>
        <fullName>E2 ubiquitin-conjugating enzyme 2</fullName>
    </alternativeName>
    <alternativeName>
        <fullName>Ubiquitin carrier protein UBC2</fullName>
    </alternativeName>
    <alternativeName>
        <fullName>Ubiquitin-protein ligase UBC2</fullName>
    </alternativeName>
</protein>
<evidence type="ECO:0000250" key="1">
    <source>
        <dbReference type="UniProtKB" id="Q5VVX9"/>
    </source>
</evidence>
<evidence type="ECO:0000255" key="2">
    <source>
        <dbReference type="PROSITE-ProRule" id="PRU00388"/>
    </source>
</evidence>
<evidence type="ECO:0000255" key="3">
    <source>
        <dbReference type="PROSITE-ProRule" id="PRU10133"/>
    </source>
</evidence>
<evidence type="ECO:0000256" key="4">
    <source>
        <dbReference type="SAM" id="MobiDB-lite"/>
    </source>
</evidence>
<reference key="1">
    <citation type="journal article" date="2006" name="Nature">
        <title>Insights from the genome of the biotrophic fungal plant pathogen Ustilago maydis.</title>
        <authorList>
            <person name="Kaemper J."/>
            <person name="Kahmann R."/>
            <person name="Boelker M."/>
            <person name="Ma L.-J."/>
            <person name="Brefort T."/>
            <person name="Saville B.J."/>
            <person name="Banuett F."/>
            <person name="Kronstad J.W."/>
            <person name="Gold S.E."/>
            <person name="Mueller O."/>
            <person name="Perlin M.H."/>
            <person name="Woesten H.A.B."/>
            <person name="de Vries R."/>
            <person name="Ruiz-Herrera J."/>
            <person name="Reynaga-Pena C.G."/>
            <person name="Snetselaar K."/>
            <person name="McCann M."/>
            <person name="Perez-Martin J."/>
            <person name="Feldbruegge M."/>
            <person name="Basse C.W."/>
            <person name="Steinberg G."/>
            <person name="Ibeas J.I."/>
            <person name="Holloman W."/>
            <person name="Guzman P."/>
            <person name="Farman M.L."/>
            <person name="Stajich J.E."/>
            <person name="Sentandreu R."/>
            <person name="Gonzalez-Prieto J.M."/>
            <person name="Kennell J.C."/>
            <person name="Molina L."/>
            <person name="Schirawski J."/>
            <person name="Mendoza-Mendoza A."/>
            <person name="Greilinger D."/>
            <person name="Muench K."/>
            <person name="Roessel N."/>
            <person name="Scherer M."/>
            <person name="Vranes M."/>
            <person name="Ladendorf O."/>
            <person name="Vincon V."/>
            <person name="Fuchs U."/>
            <person name="Sandrock B."/>
            <person name="Meng S."/>
            <person name="Ho E.C.H."/>
            <person name="Cahill M.J."/>
            <person name="Boyce K.J."/>
            <person name="Klose J."/>
            <person name="Klosterman S.J."/>
            <person name="Deelstra H.J."/>
            <person name="Ortiz-Castellanos L."/>
            <person name="Li W."/>
            <person name="Sanchez-Alonso P."/>
            <person name="Schreier P.H."/>
            <person name="Haeuser-Hahn I."/>
            <person name="Vaupel M."/>
            <person name="Koopmann E."/>
            <person name="Friedrich G."/>
            <person name="Voss H."/>
            <person name="Schlueter T."/>
            <person name="Margolis J."/>
            <person name="Platt D."/>
            <person name="Swimmer C."/>
            <person name="Gnirke A."/>
            <person name="Chen F."/>
            <person name="Vysotskaia V."/>
            <person name="Mannhaupt G."/>
            <person name="Gueldener U."/>
            <person name="Muensterkoetter M."/>
            <person name="Haase D."/>
            <person name="Oesterheld M."/>
            <person name="Mewes H.-W."/>
            <person name="Mauceli E.W."/>
            <person name="DeCaprio D."/>
            <person name="Wade C.M."/>
            <person name="Butler J."/>
            <person name="Young S.K."/>
            <person name="Jaffe D.B."/>
            <person name="Calvo S.E."/>
            <person name="Nusbaum C."/>
            <person name="Galagan J.E."/>
            <person name="Birren B.W."/>
        </authorList>
    </citation>
    <scope>NUCLEOTIDE SEQUENCE [LARGE SCALE GENOMIC DNA]</scope>
    <source>
        <strain>DSM 14603 / FGSC 9021 / UM521</strain>
    </source>
</reference>
<reference key="2">
    <citation type="submission" date="2014-09" db="EMBL/GenBank/DDBJ databases">
        <authorList>
            <person name="Gueldener U."/>
            <person name="Muensterkoetter M."/>
            <person name="Walter M.C."/>
            <person name="Mannhaupt G."/>
            <person name="Kahmann R."/>
        </authorList>
    </citation>
    <scope>GENOME REANNOTATION</scope>
    <source>
        <strain>DSM 14603 / FGSC 9021 / UM521</strain>
    </source>
</reference>
<organism>
    <name type="scientific">Mycosarcoma maydis</name>
    <name type="common">Corn smut fungus</name>
    <name type="synonym">Ustilago maydis</name>
    <dbReference type="NCBI Taxonomy" id="5270"/>
    <lineage>
        <taxon>Eukaryota</taxon>
        <taxon>Fungi</taxon>
        <taxon>Dikarya</taxon>
        <taxon>Basidiomycota</taxon>
        <taxon>Ustilaginomycotina</taxon>
        <taxon>Ustilaginomycetes</taxon>
        <taxon>Ustilaginales</taxon>
        <taxon>Ustilaginaceae</taxon>
        <taxon>Mycosarcoma</taxon>
    </lineage>
</organism>